<sequence length="417" mass="45317">MLKREMNIADYDAELWQAMEQEKVRQEEHIELIASENYTSPRVMQAQGSQLTNKYAEGYPGKRYYGGCEYVDIVEQLAIDRAKELFGADYANVQPHSGSQANFAVYTALLEPGDTVLGMNLAHGGHLTHGSPVNFSGKLYNIVPYGIDATGHIDYADLEKQAKEHKPKMIIGGFSAYSGVVDWAKMREIADSIGAYLFVDMAHVAGLVAAGVYPNPVPHAHVVTTTTHKTLAGPRGGLILAKGGSEELYKKLNSAVFPGGQGGPLMHVIAGKAVALKEAMEPEFKTYQQQVAKNAKAMVEVFLERGYKVVSGGTDNHLFLVDLVDKNLTGKEADAALGRANITVNKNSVPNDPKSPFVTSGIRVGTPAITRRGFKEAEAKELAGWMCDVLDSINDEAVIERIKGKVLDICARYPVYA</sequence>
<protein>
    <recommendedName>
        <fullName evidence="1">Serine hydroxymethyltransferase</fullName>
        <shortName evidence="1">SHMT</shortName>
        <shortName evidence="1">Serine methylase</shortName>
        <ecNumber evidence="1">2.1.2.1</ecNumber>
    </recommendedName>
</protein>
<feature type="chain" id="PRO_1000006323" description="Serine hydroxymethyltransferase">
    <location>
        <begin position="1"/>
        <end position="417"/>
    </location>
</feature>
<feature type="binding site" evidence="1">
    <location>
        <position position="121"/>
    </location>
    <ligand>
        <name>(6S)-5,6,7,8-tetrahydrofolate</name>
        <dbReference type="ChEBI" id="CHEBI:57453"/>
    </ligand>
</feature>
<feature type="binding site" evidence="1">
    <location>
        <begin position="125"/>
        <end position="127"/>
    </location>
    <ligand>
        <name>(6S)-5,6,7,8-tetrahydrofolate</name>
        <dbReference type="ChEBI" id="CHEBI:57453"/>
    </ligand>
</feature>
<feature type="binding site" evidence="1">
    <location>
        <begin position="355"/>
        <end position="357"/>
    </location>
    <ligand>
        <name>(6S)-5,6,7,8-tetrahydrofolate</name>
        <dbReference type="ChEBI" id="CHEBI:57453"/>
    </ligand>
</feature>
<feature type="site" description="Plays an important role in substrate specificity" evidence="1">
    <location>
        <position position="228"/>
    </location>
</feature>
<feature type="modified residue" description="N6-acetyllysine" evidence="1">
    <location>
        <position position="54"/>
    </location>
</feature>
<feature type="modified residue" description="N6-(pyridoxal phosphate)lysine" evidence="1">
    <location>
        <position position="229"/>
    </location>
</feature>
<feature type="modified residue" description="N6-acetyllysine" evidence="1">
    <location>
        <position position="250"/>
    </location>
</feature>
<feature type="modified residue" description="N6-acetyllysine" evidence="1">
    <location>
        <position position="285"/>
    </location>
</feature>
<feature type="modified residue" description="N6-acetyllysine" evidence="1">
    <location>
        <position position="354"/>
    </location>
</feature>
<feature type="modified residue" description="N6-acetyllysine" evidence="1">
    <location>
        <position position="375"/>
    </location>
</feature>
<proteinExistence type="inferred from homology"/>
<organism>
    <name type="scientific">Shigella flexneri serotype 5b (strain 8401)</name>
    <dbReference type="NCBI Taxonomy" id="373384"/>
    <lineage>
        <taxon>Bacteria</taxon>
        <taxon>Pseudomonadati</taxon>
        <taxon>Pseudomonadota</taxon>
        <taxon>Gammaproteobacteria</taxon>
        <taxon>Enterobacterales</taxon>
        <taxon>Enterobacteriaceae</taxon>
        <taxon>Shigella</taxon>
    </lineage>
</organism>
<accession>Q0T1W9</accession>
<comment type="function">
    <text evidence="1">Catalyzes the reversible interconversion of serine and glycine with tetrahydrofolate (THF) serving as the one-carbon carrier. This reaction serves as the major source of one-carbon groups required for the biosynthesis of purines, thymidylate, methionine, and other important biomolecules. Also exhibits THF-independent aldolase activity toward beta-hydroxyamino acids, producing glycine and aldehydes, via a retro-aldol mechanism.</text>
</comment>
<comment type="catalytic activity">
    <reaction evidence="1">
        <text>(6R)-5,10-methylene-5,6,7,8-tetrahydrofolate + glycine + H2O = (6S)-5,6,7,8-tetrahydrofolate + L-serine</text>
        <dbReference type="Rhea" id="RHEA:15481"/>
        <dbReference type="ChEBI" id="CHEBI:15377"/>
        <dbReference type="ChEBI" id="CHEBI:15636"/>
        <dbReference type="ChEBI" id="CHEBI:33384"/>
        <dbReference type="ChEBI" id="CHEBI:57305"/>
        <dbReference type="ChEBI" id="CHEBI:57453"/>
        <dbReference type="EC" id="2.1.2.1"/>
    </reaction>
</comment>
<comment type="cofactor">
    <cofactor evidence="1">
        <name>pyridoxal 5'-phosphate</name>
        <dbReference type="ChEBI" id="CHEBI:597326"/>
    </cofactor>
</comment>
<comment type="pathway">
    <text evidence="1">One-carbon metabolism; tetrahydrofolate interconversion.</text>
</comment>
<comment type="pathway">
    <text evidence="1">Amino-acid biosynthesis; glycine biosynthesis; glycine from L-serine: step 1/1.</text>
</comment>
<comment type="subunit">
    <text evidence="1">Homodimer.</text>
</comment>
<comment type="subcellular location">
    <subcellularLocation>
        <location evidence="1">Cytoplasm</location>
    </subcellularLocation>
</comment>
<comment type="similarity">
    <text evidence="1">Belongs to the SHMT family.</text>
</comment>
<reference key="1">
    <citation type="journal article" date="2006" name="BMC Genomics">
        <title>Complete genome sequence of Shigella flexneri 5b and comparison with Shigella flexneri 2a.</title>
        <authorList>
            <person name="Nie H."/>
            <person name="Yang F."/>
            <person name="Zhang X."/>
            <person name="Yang J."/>
            <person name="Chen L."/>
            <person name="Wang J."/>
            <person name="Xiong Z."/>
            <person name="Peng J."/>
            <person name="Sun L."/>
            <person name="Dong J."/>
            <person name="Xue Y."/>
            <person name="Xu X."/>
            <person name="Chen S."/>
            <person name="Yao Z."/>
            <person name="Shen Y."/>
            <person name="Jin Q."/>
        </authorList>
    </citation>
    <scope>NUCLEOTIDE SEQUENCE [LARGE SCALE GENOMIC DNA]</scope>
    <source>
        <strain>8401</strain>
    </source>
</reference>
<dbReference type="EC" id="2.1.2.1" evidence="1"/>
<dbReference type="EMBL" id="CP000266">
    <property type="protein sequence ID" value="ABF04696.1"/>
    <property type="molecule type" value="Genomic_DNA"/>
</dbReference>
<dbReference type="RefSeq" id="WP_000919159.1">
    <property type="nucleotide sequence ID" value="NC_008258.1"/>
</dbReference>
<dbReference type="SMR" id="Q0T1W9"/>
<dbReference type="GeneID" id="89517346"/>
<dbReference type="KEGG" id="sfv:SFV_2599"/>
<dbReference type="HOGENOM" id="CLU_022477_2_1_6"/>
<dbReference type="UniPathway" id="UPA00193"/>
<dbReference type="UniPathway" id="UPA00288">
    <property type="reaction ID" value="UER01023"/>
</dbReference>
<dbReference type="Proteomes" id="UP000000659">
    <property type="component" value="Chromosome"/>
</dbReference>
<dbReference type="GO" id="GO:0005829">
    <property type="term" value="C:cytosol"/>
    <property type="evidence" value="ECO:0007669"/>
    <property type="project" value="TreeGrafter"/>
</dbReference>
<dbReference type="GO" id="GO:0004372">
    <property type="term" value="F:glycine hydroxymethyltransferase activity"/>
    <property type="evidence" value="ECO:0007669"/>
    <property type="project" value="UniProtKB-UniRule"/>
</dbReference>
<dbReference type="GO" id="GO:0030170">
    <property type="term" value="F:pyridoxal phosphate binding"/>
    <property type="evidence" value="ECO:0007669"/>
    <property type="project" value="UniProtKB-UniRule"/>
</dbReference>
<dbReference type="GO" id="GO:0019264">
    <property type="term" value="P:glycine biosynthetic process from serine"/>
    <property type="evidence" value="ECO:0007669"/>
    <property type="project" value="UniProtKB-UniRule"/>
</dbReference>
<dbReference type="GO" id="GO:0035999">
    <property type="term" value="P:tetrahydrofolate interconversion"/>
    <property type="evidence" value="ECO:0007669"/>
    <property type="project" value="UniProtKB-UniRule"/>
</dbReference>
<dbReference type="CDD" id="cd00378">
    <property type="entry name" value="SHMT"/>
    <property type="match status" value="1"/>
</dbReference>
<dbReference type="FunFam" id="3.40.640.10:FF:000001">
    <property type="entry name" value="Serine hydroxymethyltransferase"/>
    <property type="match status" value="1"/>
</dbReference>
<dbReference type="FunFam" id="3.90.1150.10:FF:000003">
    <property type="entry name" value="Serine hydroxymethyltransferase"/>
    <property type="match status" value="1"/>
</dbReference>
<dbReference type="Gene3D" id="3.90.1150.10">
    <property type="entry name" value="Aspartate Aminotransferase, domain 1"/>
    <property type="match status" value="1"/>
</dbReference>
<dbReference type="Gene3D" id="3.40.640.10">
    <property type="entry name" value="Type I PLP-dependent aspartate aminotransferase-like (Major domain)"/>
    <property type="match status" value="1"/>
</dbReference>
<dbReference type="HAMAP" id="MF_00051">
    <property type="entry name" value="SHMT"/>
    <property type="match status" value="1"/>
</dbReference>
<dbReference type="InterPro" id="IPR015424">
    <property type="entry name" value="PyrdxlP-dep_Trfase"/>
</dbReference>
<dbReference type="InterPro" id="IPR015421">
    <property type="entry name" value="PyrdxlP-dep_Trfase_major"/>
</dbReference>
<dbReference type="InterPro" id="IPR015422">
    <property type="entry name" value="PyrdxlP-dep_Trfase_small"/>
</dbReference>
<dbReference type="InterPro" id="IPR001085">
    <property type="entry name" value="Ser_HO-MeTrfase"/>
</dbReference>
<dbReference type="InterPro" id="IPR049943">
    <property type="entry name" value="Ser_HO-MeTrfase-like"/>
</dbReference>
<dbReference type="InterPro" id="IPR019798">
    <property type="entry name" value="Ser_HO-MeTrfase_PLP_BS"/>
</dbReference>
<dbReference type="InterPro" id="IPR039429">
    <property type="entry name" value="SHMT-like_dom"/>
</dbReference>
<dbReference type="NCBIfam" id="NF000586">
    <property type="entry name" value="PRK00011.1"/>
    <property type="match status" value="1"/>
</dbReference>
<dbReference type="PANTHER" id="PTHR11680">
    <property type="entry name" value="SERINE HYDROXYMETHYLTRANSFERASE"/>
    <property type="match status" value="1"/>
</dbReference>
<dbReference type="PANTHER" id="PTHR11680:SF50">
    <property type="entry name" value="SERINE HYDROXYMETHYLTRANSFERASE"/>
    <property type="match status" value="1"/>
</dbReference>
<dbReference type="Pfam" id="PF00464">
    <property type="entry name" value="SHMT"/>
    <property type="match status" value="1"/>
</dbReference>
<dbReference type="PIRSF" id="PIRSF000412">
    <property type="entry name" value="SHMT"/>
    <property type="match status" value="1"/>
</dbReference>
<dbReference type="SUPFAM" id="SSF53383">
    <property type="entry name" value="PLP-dependent transferases"/>
    <property type="match status" value="1"/>
</dbReference>
<dbReference type="PROSITE" id="PS00096">
    <property type="entry name" value="SHMT"/>
    <property type="match status" value="1"/>
</dbReference>
<evidence type="ECO:0000255" key="1">
    <source>
        <dbReference type="HAMAP-Rule" id="MF_00051"/>
    </source>
</evidence>
<gene>
    <name evidence="1" type="primary">glyA</name>
    <name type="ordered locus">SFV_2599</name>
</gene>
<name>GLYA_SHIF8</name>
<keyword id="KW-0007">Acetylation</keyword>
<keyword id="KW-0028">Amino-acid biosynthesis</keyword>
<keyword id="KW-0963">Cytoplasm</keyword>
<keyword id="KW-0554">One-carbon metabolism</keyword>
<keyword id="KW-0663">Pyridoxal phosphate</keyword>
<keyword id="KW-0808">Transferase</keyword>